<proteinExistence type="evidence at protein level"/>
<organism>
    <name type="scientific">Homo sapiens</name>
    <name type="common">Human</name>
    <dbReference type="NCBI Taxonomy" id="9606"/>
    <lineage>
        <taxon>Eukaryota</taxon>
        <taxon>Metazoa</taxon>
        <taxon>Chordata</taxon>
        <taxon>Craniata</taxon>
        <taxon>Vertebrata</taxon>
        <taxon>Euteleostomi</taxon>
        <taxon>Mammalia</taxon>
        <taxon>Eutheria</taxon>
        <taxon>Euarchontoglires</taxon>
        <taxon>Primates</taxon>
        <taxon>Haplorrhini</taxon>
        <taxon>Catarrhini</taxon>
        <taxon>Hominidae</taxon>
        <taxon>Homo</taxon>
    </lineage>
</organism>
<dbReference type="EMBL" id="AK055701">
    <property type="protein sequence ID" value="BAB70989.1"/>
    <property type="molecule type" value="mRNA"/>
</dbReference>
<dbReference type="EMBL" id="AK289890">
    <property type="protein sequence ID" value="BAF82579.1"/>
    <property type="molecule type" value="mRNA"/>
</dbReference>
<dbReference type="EMBL" id="AC104472">
    <property type="status" value="NOT_ANNOTATED_CDS"/>
    <property type="molecule type" value="Genomic_DNA"/>
</dbReference>
<dbReference type="EMBL" id="CH471052">
    <property type="protein sequence ID" value="EAW78746.1"/>
    <property type="molecule type" value="Genomic_DNA"/>
</dbReference>
<dbReference type="EMBL" id="BC042198">
    <property type="protein sequence ID" value="AAH42198.1"/>
    <property type="molecule type" value="mRNA"/>
</dbReference>
<dbReference type="EMBL" id="BC064898">
    <property type="protein sequence ID" value="AAH64898.1"/>
    <property type="molecule type" value="mRNA"/>
</dbReference>
<dbReference type="EMBL" id="AF115515">
    <property type="protein sequence ID" value="AAO06952.1"/>
    <property type="status" value="ALT_INIT"/>
    <property type="molecule type" value="mRNA"/>
</dbReference>
<dbReference type="CCDS" id="CCDS54659.1">
    <molecule id="Q6P1S2-2"/>
</dbReference>
<dbReference type="CCDS" id="CCDS77843.1">
    <molecule id="Q6P1S2-1"/>
</dbReference>
<dbReference type="RefSeq" id="NP_001295158.1">
    <molecule id="Q6P1S2-1"/>
    <property type="nucleotide sequence ID" value="NM_001308229.2"/>
</dbReference>
<dbReference type="RefSeq" id="NP_775928.1">
    <molecule id="Q6P1S2-2"/>
    <property type="nucleotide sequence ID" value="NM_173657.3"/>
</dbReference>
<dbReference type="RefSeq" id="XP_005247436.1">
    <property type="nucleotide sequence ID" value="XM_005247379.4"/>
</dbReference>
<dbReference type="RefSeq" id="XP_011511013.1">
    <property type="nucleotide sequence ID" value="XM_011512711.2"/>
</dbReference>
<dbReference type="BioGRID" id="130076">
    <property type="interactions" value="31"/>
</dbReference>
<dbReference type="FunCoup" id="Q6P1S2">
    <property type="interactions" value="429"/>
</dbReference>
<dbReference type="IntAct" id="Q6P1S2">
    <property type="interactions" value="26"/>
</dbReference>
<dbReference type="STRING" id="9606.ENSP00000342512"/>
<dbReference type="iPTMnet" id="Q6P1S2"/>
<dbReference type="PhosphoSitePlus" id="Q6P1S2"/>
<dbReference type="SwissPalm" id="Q6P1S2"/>
<dbReference type="BioMuta" id="C3orf33"/>
<dbReference type="DMDM" id="317373335"/>
<dbReference type="jPOST" id="Q6P1S2"/>
<dbReference type="MassIVE" id="Q6P1S2"/>
<dbReference type="PaxDb" id="9606-ENSP00000445446"/>
<dbReference type="PeptideAtlas" id="Q6P1S2"/>
<dbReference type="ProteomicsDB" id="66873">
    <molecule id="Q6P1S2-1"/>
</dbReference>
<dbReference type="ProteomicsDB" id="77500"/>
<dbReference type="Pumba" id="Q6P1S2"/>
<dbReference type="Antibodypedia" id="46752">
    <property type="antibodies" value="49 antibodies from 11 providers"/>
</dbReference>
<dbReference type="DNASU" id="285315"/>
<dbReference type="Ensembl" id="ENST00000340171.7">
    <molecule id="Q6P1S2-1"/>
    <property type="protein sequence ID" value="ENSP00000342512.2"/>
    <property type="gene ID" value="ENSG00000174928.16"/>
</dbReference>
<dbReference type="Ensembl" id="ENST00000534941.2">
    <molecule id="Q6P1S2-2"/>
    <property type="protein sequence ID" value="ENSP00000445446.1"/>
    <property type="gene ID" value="ENSG00000174928.16"/>
</dbReference>
<dbReference type="GeneID" id="285315"/>
<dbReference type="KEGG" id="hsa:285315"/>
<dbReference type="MANE-Select" id="ENST00000340171.7">
    <property type="protein sequence ID" value="ENSP00000342512.2"/>
    <property type="RefSeq nucleotide sequence ID" value="NM_001308229.2"/>
    <property type="RefSeq protein sequence ID" value="NP_001295158.1"/>
</dbReference>
<dbReference type="UCSC" id="uc003fam.2">
    <molecule id="Q6P1S2-1"/>
    <property type="organism name" value="human"/>
</dbReference>
<dbReference type="AGR" id="HGNC:26434"/>
<dbReference type="CTD" id="285315"/>
<dbReference type="DisGeNET" id="285315"/>
<dbReference type="GeneCards" id="C3orf33"/>
<dbReference type="HGNC" id="HGNC:26434">
    <property type="gene designation" value="C3orf33"/>
</dbReference>
<dbReference type="HPA" id="ENSG00000174928">
    <property type="expression patterns" value="Low tissue specificity"/>
</dbReference>
<dbReference type="MIM" id="619654">
    <property type="type" value="gene"/>
</dbReference>
<dbReference type="neXtProt" id="NX_Q6P1S2"/>
<dbReference type="OpenTargets" id="ENSG00000174928"/>
<dbReference type="PharmGKB" id="PA142672394"/>
<dbReference type="VEuPathDB" id="HostDB:ENSG00000174928"/>
<dbReference type="eggNOG" id="ENOG502QR9T">
    <property type="taxonomic scope" value="Eukaryota"/>
</dbReference>
<dbReference type="GeneTree" id="ENSGT00390000004493"/>
<dbReference type="HOGENOM" id="CLU_069834_0_0_1"/>
<dbReference type="InParanoid" id="Q6P1S2"/>
<dbReference type="OMA" id="ETWKENM"/>
<dbReference type="OrthoDB" id="6220511at2759"/>
<dbReference type="PAN-GO" id="Q6P1S2">
    <property type="GO annotations" value="1 GO annotation based on evolutionary models"/>
</dbReference>
<dbReference type="PhylomeDB" id="Q6P1S2"/>
<dbReference type="TreeFam" id="TF313180"/>
<dbReference type="PathwayCommons" id="Q6P1S2"/>
<dbReference type="SignaLink" id="Q6P1S2"/>
<dbReference type="BioGRID-ORCS" id="285315">
    <property type="hits" value="17 hits in 1122 CRISPR screens"/>
</dbReference>
<dbReference type="ChiTaRS" id="C3orf33">
    <property type="organism name" value="human"/>
</dbReference>
<dbReference type="GenomeRNAi" id="285315"/>
<dbReference type="Pharos" id="Q6P1S2">
    <property type="development level" value="Tbio"/>
</dbReference>
<dbReference type="PRO" id="PR:Q6P1S2"/>
<dbReference type="Proteomes" id="UP000005640">
    <property type="component" value="Chromosome 3"/>
</dbReference>
<dbReference type="RNAct" id="Q6P1S2">
    <property type="molecule type" value="protein"/>
</dbReference>
<dbReference type="Bgee" id="ENSG00000174928">
    <property type="expression patterns" value="Expressed in right adrenal gland and 98 other cell types or tissues"/>
</dbReference>
<dbReference type="ExpressionAtlas" id="Q6P1S2">
    <property type="expression patterns" value="baseline and differential"/>
</dbReference>
<dbReference type="GO" id="GO:0005615">
    <property type="term" value="C:extracellular space"/>
    <property type="evidence" value="ECO:0000314"/>
    <property type="project" value="UniProtKB"/>
</dbReference>
<dbReference type="GO" id="GO:0016020">
    <property type="term" value="C:membrane"/>
    <property type="evidence" value="ECO:0007669"/>
    <property type="project" value="UniProtKB-SubCell"/>
</dbReference>
<dbReference type="GO" id="GO:0005739">
    <property type="term" value="C:mitochondrion"/>
    <property type="evidence" value="ECO:0006056"/>
    <property type="project" value="FlyBase"/>
</dbReference>
<dbReference type="GO" id="GO:0070373">
    <property type="term" value="P:negative regulation of ERK1 and ERK2 cascade"/>
    <property type="evidence" value="ECO:0000314"/>
    <property type="project" value="UniProtKB"/>
</dbReference>
<dbReference type="GO" id="GO:0051090">
    <property type="term" value="P:regulation of DNA-binding transcription factor activity"/>
    <property type="evidence" value="ECO:0000314"/>
    <property type="project" value="UniProtKB"/>
</dbReference>
<dbReference type="FunFam" id="2.40.50.90:FF:000024">
    <property type="entry name" value="Chromosome 3 C3orf33 homolog"/>
    <property type="match status" value="1"/>
</dbReference>
<dbReference type="Gene3D" id="2.40.50.90">
    <property type="match status" value="1"/>
</dbReference>
<dbReference type="InterPro" id="IPR042421">
    <property type="entry name" value="C3orf33-like"/>
</dbReference>
<dbReference type="InterPro" id="IPR035437">
    <property type="entry name" value="SNase_OB-fold_sf"/>
</dbReference>
<dbReference type="PANTHER" id="PTHR28434">
    <property type="entry name" value="PROTEIN C3ORF33"/>
    <property type="match status" value="1"/>
</dbReference>
<dbReference type="PANTHER" id="PTHR28434:SF1">
    <property type="entry name" value="PROTEIN C3ORF33"/>
    <property type="match status" value="1"/>
</dbReference>
<dbReference type="SUPFAM" id="SSF50199">
    <property type="entry name" value="Staphylococcal nuclease"/>
    <property type="match status" value="1"/>
</dbReference>
<evidence type="ECO:0000255" key="1"/>
<evidence type="ECO:0000269" key="2">
    <source>
    </source>
</evidence>
<evidence type="ECO:0000269" key="3">
    <source>
    </source>
</evidence>
<evidence type="ECO:0000269" key="4">
    <source>
    </source>
</evidence>
<evidence type="ECO:0000269" key="5">
    <source ref="5"/>
</evidence>
<evidence type="ECO:0000303" key="6">
    <source>
    </source>
</evidence>
<evidence type="ECO:0000305" key="7"/>
<evidence type="ECO:0007744" key="8">
    <source>
    </source>
</evidence>
<sequence>MAGQPAATGSPSADKDGMEPNVVARISQWADDHLRLVRNISTGMAIAGIMLLLRSIRLTSKFTSSSDIPVEFIRRNVKLRGRLRRITENGLEIEHIPITLPIIASLRKEPRGALLVKLAGVELAETGKAWLQKELKPSQLLWFQLLGKENSALFCYLLVSKGGYFSVNLNEEILRRGLGKTVLVKGLKYDSKIYWTVHRNLLKAELTALKKGEGIWKEDSEKESYLEKFKDSWREIWKKDSFLKTTGSDFSLKKESYYEKLKRTYEIWKDNMNNCSLILKFRELISRINFRRKG</sequence>
<comment type="function">
    <molecule>Isoform 2</molecule>
    <text>Secreted protein may play a role in transcription regulation via the MAPK3/MAPK1 pathway through an unidentified receptor on the plasma membrane.</text>
</comment>
<comment type="interaction">
    <interactant intactId="EBI-13382270">
        <id>Q6P1S2</id>
    </interactant>
    <interactant intactId="EBI-10278496">
        <id>Q53QW1</id>
        <label>TEX44</label>
    </interactant>
    <organismsDiffer>false</organismsDiffer>
    <experiments>3</experiments>
</comment>
<comment type="subcellular location">
    <molecule>Isoform 1</molecule>
    <subcellularLocation>
        <location evidence="7">Membrane</location>
        <topology evidence="7">Single-pass membrane protein</topology>
    </subcellularLocation>
</comment>
<comment type="subcellular location">
    <molecule>Isoform 2</molecule>
    <subcellularLocation>
        <location evidence="4">Secreted</location>
    </subcellularLocation>
</comment>
<comment type="alternative products">
    <event type="alternative splicing"/>
    <isoform>
        <id>Q6P1S2-1</id>
        <name>1</name>
        <sequence type="displayed"/>
    </isoform>
    <isoform>
        <id>Q6P1S2-2</id>
        <name>2</name>
        <sequence type="described" ref="VSP_046233"/>
    </isoform>
</comment>
<comment type="tissue specificity">
    <text evidence="4">Highly expressed in ileocecal tissue and endometrium.</text>
</comment>
<comment type="sequence caution" evidence="7">
    <conflict type="erroneous initiation">
        <sequence resource="EMBL-CDS" id="AAO06952"/>
    </conflict>
    <text>Truncated N-terminus.</text>
</comment>
<gene>
    <name type="primary">C3orf33</name>
    <name type="ORF">MSTP052</name>
</gene>
<feature type="initiator methionine" description="Removed" evidence="8">
    <location>
        <position position="1"/>
    </location>
</feature>
<feature type="chain" id="PRO_0000254577" description="Protein C3orf33">
    <location>
        <begin position="2"/>
        <end position="294"/>
    </location>
</feature>
<feature type="transmembrane region" description="Helical" evidence="1">
    <location>
        <begin position="40"/>
        <end position="56"/>
    </location>
</feature>
<feature type="modified residue" description="N-acetylalanine" evidence="8">
    <location>
        <position position="2"/>
    </location>
</feature>
<feature type="splice variant" id="VSP_046233" description="In isoform 2." evidence="6">
    <location>
        <begin position="1"/>
        <end position="43"/>
    </location>
</feature>
<feature type="sequence variant" id="VAR_028846" description="In dbSNP:rs9853408.">
    <original>A</original>
    <variation>T</variation>
    <location>
        <position position="47"/>
    </location>
</feature>
<feature type="sequence variant" id="VAR_028847" description="In dbSNP:rs358733." evidence="2 3 5">
    <original>S</original>
    <variation>N</variation>
    <location>
        <position position="160"/>
    </location>
</feature>
<feature type="sequence conflict" description="In Ref. 5; AAO06952." evidence="7" ref="5">
    <original>F</original>
    <variation>V</variation>
    <location>
        <position position="143"/>
    </location>
</feature>
<accession>Q6P1S2</accession>
<accession>A8K1H5</accession>
<accession>Q86YE6</accession>
<accession>Q8IXA7</accession>
<accession>Q96NB5</accession>
<reference key="1">
    <citation type="journal article" date="2004" name="Nat. Genet.">
        <title>Complete sequencing and characterization of 21,243 full-length human cDNAs.</title>
        <authorList>
            <person name="Ota T."/>
            <person name="Suzuki Y."/>
            <person name="Nishikawa T."/>
            <person name="Otsuki T."/>
            <person name="Sugiyama T."/>
            <person name="Irie R."/>
            <person name="Wakamatsu A."/>
            <person name="Hayashi K."/>
            <person name="Sato H."/>
            <person name="Nagai K."/>
            <person name="Kimura K."/>
            <person name="Makita H."/>
            <person name="Sekine M."/>
            <person name="Obayashi M."/>
            <person name="Nishi T."/>
            <person name="Shibahara T."/>
            <person name="Tanaka T."/>
            <person name="Ishii S."/>
            <person name="Yamamoto J."/>
            <person name="Saito K."/>
            <person name="Kawai Y."/>
            <person name="Isono Y."/>
            <person name="Nakamura Y."/>
            <person name="Nagahari K."/>
            <person name="Murakami K."/>
            <person name="Yasuda T."/>
            <person name="Iwayanagi T."/>
            <person name="Wagatsuma M."/>
            <person name="Shiratori A."/>
            <person name="Sudo H."/>
            <person name="Hosoiri T."/>
            <person name="Kaku Y."/>
            <person name="Kodaira H."/>
            <person name="Kondo H."/>
            <person name="Sugawara M."/>
            <person name="Takahashi M."/>
            <person name="Kanda K."/>
            <person name="Yokoi T."/>
            <person name="Furuya T."/>
            <person name="Kikkawa E."/>
            <person name="Omura Y."/>
            <person name="Abe K."/>
            <person name="Kamihara K."/>
            <person name="Katsuta N."/>
            <person name="Sato K."/>
            <person name="Tanikawa M."/>
            <person name="Yamazaki M."/>
            <person name="Ninomiya K."/>
            <person name="Ishibashi T."/>
            <person name="Yamashita H."/>
            <person name="Murakawa K."/>
            <person name="Fujimori K."/>
            <person name="Tanai H."/>
            <person name="Kimata M."/>
            <person name="Watanabe M."/>
            <person name="Hiraoka S."/>
            <person name="Chiba Y."/>
            <person name="Ishida S."/>
            <person name="Ono Y."/>
            <person name="Takiguchi S."/>
            <person name="Watanabe S."/>
            <person name="Yosida M."/>
            <person name="Hotuta T."/>
            <person name="Kusano J."/>
            <person name="Kanehori K."/>
            <person name="Takahashi-Fujii A."/>
            <person name="Hara H."/>
            <person name="Tanase T.-O."/>
            <person name="Nomura Y."/>
            <person name="Togiya S."/>
            <person name="Komai F."/>
            <person name="Hara R."/>
            <person name="Takeuchi K."/>
            <person name="Arita M."/>
            <person name="Imose N."/>
            <person name="Musashino K."/>
            <person name="Yuuki H."/>
            <person name="Oshima A."/>
            <person name="Sasaki N."/>
            <person name="Aotsuka S."/>
            <person name="Yoshikawa Y."/>
            <person name="Matsunawa H."/>
            <person name="Ichihara T."/>
            <person name="Shiohata N."/>
            <person name="Sano S."/>
            <person name="Moriya S."/>
            <person name="Momiyama H."/>
            <person name="Satoh N."/>
            <person name="Takami S."/>
            <person name="Terashima Y."/>
            <person name="Suzuki O."/>
            <person name="Nakagawa S."/>
            <person name="Senoh A."/>
            <person name="Mizoguchi H."/>
            <person name="Goto Y."/>
            <person name="Shimizu F."/>
            <person name="Wakebe H."/>
            <person name="Hishigaki H."/>
            <person name="Watanabe T."/>
            <person name="Sugiyama A."/>
            <person name="Takemoto M."/>
            <person name="Kawakami B."/>
            <person name="Yamazaki M."/>
            <person name="Watanabe K."/>
            <person name="Kumagai A."/>
            <person name="Itakura S."/>
            <person name="Fukuzumi Y."/>
            <person name="Fujimori Y."/>
            <person name="Komiyama M."/>
            <person name="Tashiro H."/>
            <person name="Tanigami A."/>
            <person name="Fujiwara T."/>
            <person name="Ono T."/>
            <person name="Yamada K."/>
            <person name="Fujii Y."/>
            <person name="Ozaki K."/>
            <person name="Hirao M."/>
            <person name="Ohmori Y."/>
            <person name="Kawabata A."/>
            <person name="Hikiji T."/>
            <person name="Kobatake N."/>
            <person name="Inagaki H."/>
            <person name="Ikema Y."/>
            <person name="Okamoto S."/>
            <person name="Okitani R."/>
            <person name="Kawakami T."/>
            <person name="Noguchi S."/>
            <person name="Itoh T."/>
            <person name="Shigeta K."/>
            <person name="Senba T."/>
            <person name="Matsumura K."/>
            <person name="Nakajima Y."/>
            <person name="Mizuno T."/>
            <person name="Morinaga M."/>
            <person name="Sasaki M."/>
            <person name="Togashi T."/>
            <person name="Oyama M."/>
            <person name="Hata H."/>
            <person name="Watanabe M."/>
            <person name="Komatsu T."/>
            <person name="Mizushima-Sugano J."/>
            <person name="Satoh T."/>
            <person name="Shirai Y."/>
            <person name="Takahashi Y."/>
            <person name="Nakagawa K."/>
            <person name="Okumura K."/>
            <person name="Nagase T."/>
            <person name="Nomura N."/>
            <person name="Kikuchi H."/>
            <person name="Masuho Y."/>
            <person name="Yamashita R."/>
            <person name="Nakai K."/>
            <person name="Yada T."/>
            <person name="Nakamura Y."/>
            <person name="Ohara O."/>
            <person name="Isogai T."/>
            <person name="Sugano S."/>
        </authorList>
    </citation>
    <scope>NUCLEOTIDE SEQUENCE [LARGE SCALE MRNA] (ISOFORMS 1 AND 2)</scope>
    <scope>VARIANT ASN-160</scope>
    <source>
        <tissue>Corpus callosum</tissue>
    </source>
</reference>
<reference key="2">
    <citation type="journal article" date="2006" name="Nature">
        <title>The DNA sequence, annotation and analysis of human chromosome 3.</title>
        <authorList>
            <person name="Muzny D.M."/>
            <person name="Scherer S.E."/>
            <person name="Kaul R."/>
            <person name="Wang J."/>
            <person name="Yu J."/>
            <person name="Sudbrak R."/>
            <person name="Buhay C.J."/>
            <person name="Chen R."/>
            <person name="Cree A."/>
            <person name="Ding Y."/>
            <person name="Dugan-Rocha S."/>
            <person name="Gill R."/>
            <person name="Gunaratne P."/>
            <person name="Harris R.A."/>
            <person name="Hawes A.C."/>
            <person name="Hernandez J."/>
            <person name="Hodgson A.V."/>
            <person name="Hume J."/>
            <person name="Jackson A."/>
            <person name="Khan Z.M."/>
            <person name="Kovar-Smith C."/>
            <person name="Lewis L.R."/>
            <person name="Lozado R.J."/>
            <person name="Metzker M.L."/>
            <person name="Milosavljevic A."/>
            <person name="Miner G.R."/>
            <person name="Morgan M.B."/>
            <person name="Nazareth L.V."/>
            <person name="Scott G."/>
            <person name="Sodergren E."/>
            <person name="Song X.-Z."/>
            <person name="Steffen D."/>
            <person name="Wei S."/>
            <person name="Wheeler D.A."/>
            <person name="Wright M.W."/>
            <person name="Worley K.C."/>
            <person name="Yuan Y."/>
            <person name="Zhang Z."/>
            <person name="Adams C.Q."/>
            <person name="Ansari-Lari M.A."/>
            <person name="Ayele M."/>
            <person name="Brown M.J."/>
            <person name="Chen G."/>
            <person name="Chen Z."/>
            <person name="Clendenning J."/>
            <person name="Clerc-Blankenburg K.P."/>
            <person name="Chen R."/>
            <person name="Chen Z."/>
            <person name="Davis C."/>
            <person name="Delgado O."/>
            <person name="Dinh H.H."/>
            <person name="Dong W."/>
            <person name="Draper H."/>
            <person name="Ernst S."/>
            <person name="Fu G."/>
            <person name="Gonzalez-Garay M.L."/>
            <person name="Garcia D.K."/>
            <person name="Gillett W."/>
            <person name="Gu J."/>
            <person name="Hao B."/>
            <person name="Haugen E."/>
            <person name="Havlak P."/>
            <person name="He X."/>
            <person name="Hennig S."/>
            <person name="Hu S."/>
            <person name="Huang W."/>
            <person name="Jackson L.R."/>
            <person name="Jacob L.S."/>
            <person name="Kelly S.H."/>
            <person name="Kube M."/>
            <person name="Levy R."/>
            <person name="Li Z."/>
            <person name="Liu B."/>
            <person name="Liu J."/>
            <person name="Liu W."/>
            <person name="Lu J."/>
            <person name="Maheshwari M."/>
            <person name="Nguyen B.-V."/>
            <person name="Okwuonu G.O."/>
            <person name="Palmeiri A."/>
            <person name="Pasternak S."/>
            <person name="Perez L.M."/>
            <person name="Phelps K.A."/>
            <person name="Plopper F.J."/>
            <person name="Qiang B."/>
            <person name="Raymond C."/>
            <person name="Rodriguez R."/>
            <person name="Saenphimmachak C."/>
            <person name="Santibanez J."/>
            <person name="Shen H."/>
            <person name="Shen Y."/>
            <person name="Subramanian S."/>
            <person name="Tabor P.E."/>
            <person name="Verduzco D."/>
            <person name="Waldron L."/>
            <person name="Wang J."/>
            <person name="Wang J."/>
            <person name="Wang Q."/>
            <person name="Williams G.A."/>
            <person name="Wong G.K.-S."/>
            <person name="Yao Z."/>
            <person name="Zhang J."/>
            <person name="Zhang X."/>
            <person name="Zhao G."/>
            <person name="Zhou J."/>
            <person name="Zhou Y."/>
            <person name="Nelson D."/>
            <person name="Lehrach H."/>
            <person name="Reinhardt R."/>
            <person name="Naylor S.L."/>
            <person name="Yang H."/>
            <person name="Olson M."/>
            <person name="Weinstock G."/>
            <person name="Gibbs R.A."/>
        </authorList>
    </citation>
    <scope>NUCLEOTIDE SEQUENCE [LARGE SCALE GENOMIC DNA]</scope>
</reference>
<reference key="3">
    <citation type="submission" date="2005-09" db="EMBL/GenBank/DDBJ databases">
        <authorList>
            <person name="Mural R.J."/>
            <person name="Istrail S."/>
            <person name="Sutton G.G."/>
            <person name="Florea L."/>
            <person name="Halpern A.L."/>
            <person name="Mobarry C.M."/>
            <person name="Lippert R."/>
            <person name="Walenz B."/>
            <person name="Shatkay H."/>
            <person name="Dew I."/>
            <person name="Miller J.R."/>
            <person name="Flanigan M.J."/>
            <person name="Edwards N.J."/>
            <person name="Bolanos R."/>
            <person name="Fasulo D."/>
            <person name="Halldorsson B.V."/>
            <person name="Hannenhalli S."/>
            <person name="Turner R."/>
            <person name="Yooseph S."/>
            <person name="Lu F."/>
            <person name="Nusskern D.R."/>
            <person name="Shue B.C."/>
            <person name="Zheng X.H."/>
            <person name="Zhong F."/>
            <person name="Delcher A.L."/>
            <person name="Huson D.H."/>
            <person name="Kravitz S.A."/>
            <person name="Mouchard L."/>
            <person name="Reinert K."/>
            <person name="Remington K.A."/>
            <person name="Clark A.G."/>
            <person name="Waterman M.S."/>
            <person name="Eichler E.E."/>
            <person name="Adams M.D."/>
            <person name="Hunkapiller M.W."/>
            <person name="Myers E.W."/>
            <person name="Venter J.C."/>
        </authorList>
    </citation>
    <scope>NUCLEOTIDE SEQUENCE [LARGE SCALE GENOMIC DNA]</scope>
</reference>
<reference key="4">
    <citation type="journal article" date="2004" name="Genome Res.">
        <title>The status, quality, and expansion of the NIH full-length cDNA project: the Mammalian Gene Collection (MGC).</title>
        <authorList>
            <consortium name="The MGC Project Team"/>
        </authorList>
    </citation>
    <scope>NUCLEOTIDE SEQUENCE [LARGE SCALE MRNA] (ISOFORM 1)</scope>
    <scope>VARIANT ASN-160</scope>
    <source>
        <tissue>Cervix</tissue>
        <tissue>Lung</tissue>
    </source>
</reference>
<reference key="5">
    <citation type="submission" date="1998-12" db="EMBL/GenBank/DDBJ databases">
        <authorList>
            <person name="Zhao B."/>
            <person name="Xu Y.Y."/>
            <person name="Liu Y.Q."/>
            <person name="Wang X.Y."/>
            <person name="Liu B."/>
            <person name="Ye J."/>
            <person name="Song L."/>
            <person name="Zhao Y."/>
            <person name="Cao H.Q."/>
            <person name="Zhao X.W."/>
            <person name="Gao Y."/>
            <person name="Liu L.S."/>
            <person name="Ding J.F."/>
            <person name="Gao R.L."/>
            <person name="Wu Q.Y."/>
            <person name="Qiang B.Q."/>
            <person name="Yuan J.G."/>
            <person name="Liew C.C."/>
            <person name="Zhao M.S."/>
            <person name="Hui R.T."/>
        </authorList>
    </citation>
    <scope>NUCLEOTIDE SEQUENCE [LARGE SCALE MRNA] OF 2-294 (ISOFORM 1)</scope>
    <scope>VARIANT ASN-160</scope>
    <source>
        <tissue>Heart</tissue>
    </source>
</reference>
<reference key="6">
    <citation type="journal article" date="2009" name="Anal. Chem.">
        <title>Lys-N and trypsin cover complementary parts of the phosphoproteome in a refined SCX-based approach.</title>
        <authorList>
            <person name="Gauci S."/>
            <person name="Helbig A.O."/>
            <person name="Slijper M."/>
            <person name="Krijgsveld J."/>
            <person name="Heck A.J."/>
            <person name="Mohammed S."/>
        </authorList>
    </citation>
    <scope>ACETYLATION [LARGE SCALE ANALYSIS] AT ALA-2</scope>
    <scope>CLEAVAGE OF INITIATOR METHIONINE [LARGE SCALE ANALYSIS]</scope>
    <scope>IDENTIFICATION BY MASS SPECTROMETRY [LARGE SCALE ANALYSIS]</scope>
</reference>
<reference key="7">
    <citation type="journal article" date="2011" name="Mol. Biol. Rep.">
        <title>AC3-33, a novel secretory protein, inhibits Elk1 transcriptional activity via ERK pathway.</title>
        <authorList>
            <person name="Hao D."/>
            <person name="Gao P."/>
            <person name="Liu P."/>
            <person name="Zhao J."/>
            <person name="Wang Y."/>
            <person name="Yang W."/>
            <person name="Lu Y."/>
            <person name="Shi T."/>
            <person name="Zhang X."/>
        </authorList>
    </citation>
    <scope>FUNCTION (ISOFORM 2)</scope>
    <scope>SUBCELLULAR LOCATION (ISOFORM 2)</scope>
    <scope>TISSUE SPECIFICITY</scope>
</reference>
<keyword id="KW-0007">Acetylation</keyword>
<keyword id="KW-0025">Alternative splicing</keyword>
<keyword id="KW-0472">Membrane</keyword>
<keyword id="KW-1267">Proteomics identification</keyword>
<keyword id="KW-1185">Reference proteome</keyword>
<keyword id="KW-0964">Secreted</keyword>
<keyword id="KW-0812">Transmembrane</keyword>
<keyword id="KW-1133">Transmembrane helix</keyword>
<protein>
    <recommendedName>
        <fullName>Protein C3orf33</fullName>
    </recommendedName>
    <alternativeName>
        <fullName>Protein AC3-33</fullName>
    </alternativeName>
</protein>
<name>CC033_HUMAN</name>